<reference key="1">
    <citation type="submission" date="2006-02" db="EMBL/GenBank/DDBJ databases">
        <title>Complete sequence of chromosome of Jannaschia sp. CCS1.</title>
        <authorList>
            <consortium name="US DOE Joint Genome Institute"/>
            <person name="Copeland A."/>
            <person name="Lucas S."/>
            <person name="Lapidus A."/>
            <person name="Barry K."/>
            <person name="Detter J.C."/>
            <person name="Glavina del Rio T."/>
            <person name="Hammon N."/>
            <person name="Israni S."/>
            <person name="Pitluck S."/>
            <person name="Brettin T."/>
            <person name="Bruce D."/>
            <person name="Han C."/>
            <person name="Tapia R."/>
            <person name="Gilna P."/>
            <person name="Chertkov O."/>
            <person name="Saunders E."/>
            <person name="Schmutz J."/>
            <person name="Larimer F."/>
            <person name="Land M."/>
            <person name="Kyrpides N."/>
            <person name="Lykidis A."/>
            <person name="Moran M.A."/>
            <person name="Belas R."/>
            <person name="Ye W."/>
            <person name="Buchan A."/>
            <person name="Gonzalez J.M."/>
            <person name="Schell M.A."/>
            <person name="Richardson P."/>
        </authorList>
    </citation>
    <scope>NUCLEOTIDE SEQUENCE [LARGE SCALE GENOMIC DNA]</scope>
    <source>
        <strain>CCS1</strain>
    </source>
</reference>
<protein>
    <recommendedName>
        <fullName evidence="1">Large ribosomal subunit protein bL9</fullName>
    </recommendedName>
    <alternativeName>
        <fullName evidence="3">50S ribosomal protein L9</fullName>
    </alternativeName>
</protein>
<feature type="chain" id="PRO_0000258461" description="Large ribosomal subunit protein bL9">
    <location>
        <begin position="1"/>
        <end position="211"/>
    </location>
</feature>
<feature type="region of interest" description="Disordered" evidence="2">
    <location>
        <begin position="180"/>
        <end position="211"/>
    </location>
</feature>
<sequence length="211" mass="22715">MDVILLERVAKLGQMGEVVSVKEGYARNFLLPQKKALRANEMNLAAFENQKAQLEATNLETRKEAEAMGEKLAGQQFVIIRSASDSGALYGSVTIRDAAEAATAEGFTVDRKQVALIAPIKDLGIHTVMVILHPEVEVEIELNVARSPEEAELQASGKSIQDLAAEEEAQAEFEIAELFDDIGAAGMDDDDDDAPAPAQADPSSEESSEED</sequence>
<name>RL9_JANSC</name>
<evidence type="ECO:0000255" key="1">
    <source>
        <dbReference type="HAMAP-Rule" id="MF_00503"/>
    </source>
</evidence>
<evidence type="ECO:0000256" key="2">
    <source>
        <dbReference type="SAM" id="MobiDB-lite"/>
    </source>
</evidence>
<evidence type="ECO:0000305" key="3"/>
<comment type="function">
    <text evidence="1">Binds to the 23S rRNA.</text>
</comment>
<comment type="similarity">
    <text evidence="1">Belongs to the bacterial ribosomal protein bL9 family.</text>
</comment>
<accession>Q28RX5</accession>
<gene>
    <name evidence="1" type="primary">rplI</name>
    <name type="ordered locus">Jann_1620</name>
</gene>
<proteinExistence type="inferred from homology"/>
<organism>
    <name type="scientific">Jannaschia sp. (strain CCS1)</name>
    <dbReference type="NCBI Taxonomy" id="290400"/>
    <lineage>
        <taxon>Bacteria</taxon>
        <taxon>Pseudomonadati</taxon>
        <taxon>Pseudomonadota</taxon>
        <taxon>Alphaproteobacteria</taxon>
        <taxon>Rhodobacterales</taxon>
        <taxon>Roseobacteraceae</taxon>
        <taxon>Jannaschia</taxon>
    </lineage>
</organism>
<keyword id="KW-1185">Reference proteome</keyword>
<keyword id="KW-0687">Ribonucleoprotein</keyword>
<keyword id="KW-0689">Ribosomal protein</keyword>
<keyword id="KW-0694">RNA-binding</keyword>
<keyword id="KW-0699">rRNA-binding</keyword>
<dbReference type="EMBL" id="CP000264">
    <property type="protein sequence ID" value="ABD54537.1"/>
    <property type="molecule type" value="Genomic_DNA"/>
</dbReference>
<dbReference type="RefSeq" id="WP_011454742.1">
    <property type="nucleotide sequence ID" value="NC_007802.1"/>
</dbReference>
<dbReference type="SMR" id="Q28RX5"/>
<dbReference type="STRING" id="290400.Jann_1620"/>
<dbReference type="KEGG" id="jan:Jann_1620"/>
<dbReference type="eggNOG" id="COG0359">
    <property type="taxonomic scope" value="Bacteria"/>
</dbReference>
<dbReference type="HOGENOM" id="CLU_078938_1_0_5"/>
<dbReference type="OrthoDB" id="9788336at2"/>
<dbReference type="Proteomes" id="UP000008326">
    <property type="component" value="Chromosome"/>
</dbReference>
<dbReference type="GO" id="GO:1990904">
    <property type="term" value="C:ribonucleoprotein complex"/>
    <property type="evidence" value="ECO:0007669"/>
    <property type="project" value="UniProtKB-KW"/>
</dbReference>
<dbReference type="GO" id="GO:0005840">
    <property type="term" value="C:ribosome"/>
    <property type="evidence" value="ECO:0007669"/>
    <property type="project" value="UniProtKB-KW"/>
</dbReference>
<dbReference type="GO" id="GO:0019843">
    <property type="term" value="F:rRNA binding"/>
    <property type="evidence" value="ECO:0007669"/>
    <property type="project" value="UniProtKB-UniRule"/>
</dbReference>
<dbReference type="GO" id="GO:0003735">
    <property type="term" value="F:structural constituent of ribosome"/>
    <property type="evidence" value="ECO:0007669"/>
    <property type="project" value="InterPro"/>
</dbReference>
<dbReference type="GO" id="GO:0006412">
    <property type="term" value="P:translation"/>
    <property type="evidence" value="ECO:0007669"/>
    <property type="project" value="UniProtKB-UniRule"/>
</dbReference>
<dbReference type="Gene3D" id="3.10.430.100">
    <property type="entry name" value="Ribosomal protein L9, C-terminal domain"/>
    <property type="match status" value="1"/>
</dbReference>
<dbReference type="Gene3D" id="3.40.5.10">
    <property type="entry name" value="Ribosomal protein L9, N-terminal domain"/>
    <property type="match status" value="1"/>
</dbReference>
<dbReference type="HAMAP" id="MF_00503">
    <property type="entry name" value="Ribosomal_bL9"/>
    <property type="match status" value="1"/>
</dbReference>
<dbReference type="InterPro" id="IPR000244">
    <property type="entry name" value="Ribosomal_bL9"/>
</dbReference>
<dbReference type="InterPro" id="IPR009027">
    <property type="entry name" value="Ribosomal_bL9/RNase_H1_N"/>
</dbReference>
<dbReference type="InterPro" id="IPR020594">
    <property type="entry name" value="Ribosomal_bL9_bac/chp"/>
</dbReference>
<dbReference type="InterPro" id="IPR020069">
    <property type="entry name" value="Ribosomal_bL9_C"/>
</dbReference>
<dbReference type="InterPro" id="IPR036791">
    <property type="entry name" value="Ribosomal_bL9_C_sf"/>
</dbReference>
<dbReference type="InterPro" id="IPR020070">
    <property type="entry name" value="Ribosomal_bL9_N"/>
</dbReference>
<dbReference type="InterPro" id="IPR036935">
    <property type="entry name" value="Ribosomal_bL9_N_sf"/>
</dbReference>
<dbReference type="NCBIfam" id="TIGR00158">
    <property type="entry name" value="L9"/>
    <property type="match status" value="1"/>
</dbReference>
<dbReference type="PANTHER" id="PTHR21368">
    <property type="entry name" value="50S RIBOSOMAL PROTEIN L9"/>
    <property type="match status" value="1"/>
</dbReference>
<dbReference type="Pfam" id="PF03948">
    <property type="entry name" value="Ribosomal_L9_C"/>
    <property type="match status" value="1"/>
</dbReference>
<dbReference type="Pfam" id="PF01281">
    <property type="entry name" value="Ribosomal_L9_N"/>
    <property type="match status" value="1"/>
</dbReference>
<dbReference type="SUPFAM" id="SSF55658">
    <property type="entry name" value="L9 N-domain-like"/>
    <property type="match status" value="1"/>
</dbReference>
<dbReference type="SUPFAM" id="SSF55653">
    <property type="entry name" value="Ribosomal protein L9 C-domain"/>
    <property type="match status" value="1"/>
</dbReference>
<dbReference type="PROSITE" id="PS00651">
    <property type="entry name" value="RIBOSOMAL_L9"/>
    <property type="match status" value="1"/>
</dbReference>